<comment type="function">
    <text>In the hair cortex, hair keratin intermediate filaments are embedded in an interfilamentous matrix, consisting of hair keratin-associated proteins (KRTAP), which are essential for the formation of a rigid and resistant hair shaft through their extensive disulfide bond cross-linking with abundant cysteine residues of hair keratins. The matrix proteins include the high-sulfur and high-glycine-tyrosine keratins.</text>
</comment>
<comment type="subunit">
    <text>Interacts with hair keratins.</text>
</comment>
<comment type="tissue specificity">
    <text>Expression restricted exclusively to the cortical cells of hair follicles.</text>
</comment>
<comment type="similarity">
    <text evidence="1">Belongs to the KRTAP type 8 family.</text>
</comment>
<protein>
    <recommendedName>
        <fullName>Keratin-associated protein 8-1</fullName>
    </recommendedName>
    <alternativeName>
        <fullName>HGTp type I F</fullName>
    </alternativeName>
    <alternativeName>
        <fullName>High-glycine/tyrosine protein keratin</fullName>
        <shortName>HGT keratin</shortName>
    </alternativeName>
</protein>
<accession>O08633</accession>
<accession>Q3UZQ1</accession>
<reference key="1">
    <citation type="journal article" date="2005" name="Science">
        <title>The transcriptional landscape of the mammalian genome.</title>
        <authorList>
            <person name="Carninci P."/>
            <person name="Kasukawa T."/>
            <person name="Katayama S."/>
            <person name="Gough J."/>
            <person name="Frith M.C."/>
            <person name="Maeda N."/>
            <person name="Oyama R."/>
            <person name="Ravasi T."/>
            <person name="Lenhard B."/>
            <person name="Wells C."/>
            <person name="Kodzius R."/>
            <person name="Shimokawa K."/>
            <person name="Bajic V.B."/>
            <person name="Brenner S.E."/>
            <person name="Batalov S."/>
            <person name="Forrest A.R."/>
            <person name="Zavolan M."/>
            <person name="Davis M.J."/>
            <person name="Wilming L.G."/>
            <person name="Aidinis V."/>
            <person name="Allen J.E."/>
            <person name="Ambesi-Impiombato A."/>
            <person name="Apweiler R."/>
            <person name="Aturaliya R.N."/>
            <person name="Bailey T.L."/>
            <person name="Bansal M."/>
            <person name="Baxter L."/>
            <person name="Beisel K.W."/>
            <person name="Bersano T."/>
            <person name="Bono H."/>
            <person name="Chalk A.M."/>
            <person name="Chiu K.P."/>
            <person name="Choudhary V."/>
            <person name="Christoffels A."/>
            <person name="Clutterbuck D.R."/>
            <person name="Crowe M.L."/>
            <person name="Dalla E."/>
            <person name="Dalrymple B.P."/>
            <person name="de Bono B."/>
            <person name="Della Gatta G."/>
            <person name="di Bernardo D."/>
            <person name="Down T."/>
            <person name="Engstrom P."/>
            <person name="Fagiolini M."/>
            <person name="Faulkner G."/>
            <person name="Fletcher C.F."/>
            <person name="Fukushima T."/>
            <person name="Furuno M."/>
            <person name="Futaki S."/>
            <person name="Gariboldi M."/>
            <person name="Georgii-Hemming P."/>
            <person name="Gingeras T.R."/>
            <person name="Gojobori T."/>
            <person name="Green R.E."/>
            <person name="Gustincich S."/>
            <person name="Harbers M."/>
            <person name="Hayashi Y."/>
            <person name="Hensch T.K."/>
            <person name="Hirokawa N."/>
            <person name="Hill D."/>
            <person name="Huminiecki L."/>
            <person name="Iacono M."/>
            <person name="Ikeo K."/>
            <person name="Iwama A."/>
            <person name="Ishikawa T."/>
            <person name="Jakt M."/>
            <person name="Kanapin A."/>
            <person name="Katoh M."/>
            <person name="Kawasawa Y."/>
            <person name="Kelso J."/>
            <person name="Kitamura H."/>
            <person name="Kitano H."/>
            <person name="Kollias G."/>
            <person name="Krishnan S.P."/>
            <person name="Kruger A."/>
            <person name="Kummerfeld S.K."/>
            <person name="Kurochkin I.V."/>
            <person name="Lareau L.F."/>
            <person name="Lazarevic D."/>
            <person name="Lipovich L."/>
            <person name="Liu J."/>
            <person name="Liuni S."/>
            <person name="McWilliam S."/>
            <person name="Madan Babu M."/>
            <person name="Madera M."/>
            <person name="Marchionni L."/>
            <person name="Matsuda H."/>
            <person name="Matsuzawa S."/>
            <person name="Miki H."/>
            <person name="Mignone F."/>
            <person name="Miyake S."/>
            <person name="Morris K."/>
            <person name="Mottagui-Tabar S."/>
            <person name="Mulder N."/>
            <person name="Nakano N."/>
            <person name="Nakauchi H."/>
            <person name="Ng P."/>
            <person name="Nilsson R."/>
            <person name="Nishiguchi S."/>
            <person name="Nishikawa S."/>
            <person name="Nori F."/>
            <person name="Ohara O."/>
            <person name="Okazaki Y."/>
            <person name="Orlando V."/>
            <person name="Pang K.C."/>
            <person name="Pavan W.J."/>
            <person name="Pavesi G."/>
            <person name="Pesole G."/>
            <person name="Petrovsky N."/>
            <person name="Piazza S."/>
            <person name="Reed J."/>
            <person name="Reid J.F."/>
            <person name="Ring B.Z."/>
            <person name="Ringwald M."/>
            <person name="Rost B."/>
            <person name="Ruan Y."/>
            <person name="Salzberg S.L."/>
            <person name="Sandelin A."/>
            <person name="Schneider C."/>
            <person name="Schoenbach C."/>
            <person name="Sekiguchi K."/>
            <person name="Semple C.A."/>
            <person name="Seno S."/>
            <person name="Sessa L."/>
            <person name="Sheng Y."/>
            <person name="Shibata Y."/>
            <person name="Shimada H."/>
            <person name="Shimada K."/>
            <person name="Silva D."/>
            <person name="Sinclair B."/>
            <person name="Sperling S."/>
            <person name="Stupka E."/>
            <person name="Sugiura K."/>
            <person name="Sultana R."/>
            <person name="Takenaka Y."/>
            <person name="Taki K."/>
            <person name="Tammoja K."/>
            <person name="Tan S.L."/>
            <person name="Tang S."/>
            <person name="Taylor M.S."/>
            <person name="Tegner J."/>
            <person name="Teichmann S.A."/>
            <person name="Ueda H.R."/>
            <person name="van Nimwegen E."/>
            <person name="Verardo R."/>
            <person name="Wei C.L."/>
            <person name="Yagi K."/>
            <person name="Yamanishi H."/>
            <person name="Zabarovsky E."/>
            <person name="Zhu S."/>
            <person name="Zimmer A."/>
            <person name="Hide W."/>
            <person name="Bult C."/>
            <person name="Grimmond S.M."/>
            <person name="Teasdale R.D."/>
            <person name="Liu E.T."/>
            <person name="Brusic V."/>
            <person name="Quackenbush J."/>
            <person name="Wahlestedt C."/>
            <person name="Mattick J.S."/>
            <person name="Hume D.A."/>
            <person name="Kai C."/>
            <person name="Sasaki D."/>
            <person name="Tomaru Y."/>
            <person name="Fukuda S."/>
            <person name="Kanamori-Katayama M."/>
            <person name="Suzuki M."/>
            <person name="Aoki J."/>
            <person name="Arakawa T."/>
            <person name="Iida J."/>
            <person name="Imamura K."/>
            <person name="Itoh M."/>
            <person name="Kato T."/>
            <person name="Kawaji H."/>
            <person name="Kawagashira N."/>
            <person name="Kawashima T."/>
            <person name="Kojima M."/>
            <person name="Kondo S."/>
            <person name="Konno H."/>
            <person name="Nakano K."/>
            <person name="Ninomiya N."/>
            <person name="Nishio T."/>
            <person name="Okada M."/>
            <person name="Plessy C."/>
            <person name="Shibata K."/>
            <person name="Shiraki T."/>
            <person name="Suzuki S."/>
            <person name="Tagami M."/>
            <person name="Waki K."/>
            <person name="Watahiki A."/>
            <person name="Okamura-Oho Y."/>
            <person name="Suzuki H."/>
            <person name="Kawai J."/>
            <person name="Hayashizaki Y."/>
        </authorList>
    </citation>
    <scope>NUCLEOTIDE SEQUENCE [LARGE SCALE MRNA]</scope>
    <source>
        <strain>C57BL/6J</strain>
        <tissue>Head</tissue>
    </source>
</reference>
<reference key="2">
    <citation type="journal article" date="1997" name="J. Biol. Chem.">
        <title>Isolation and characterization of mouse high-glycine/tyrosine proteins.</title>
        <authorList>
            <person name="Aoki N."/>
            <person name="Ito K."/>
            <person name="Ito M."/>
        </authorList>
    </citation>
    <scope>NUCLEOTIDE SEQUENCE [MRNA] OF 9-61</scope>
    <source>
        <tissue>Skin</tissue>
    </source>
</reference>
<sequence>MYYTGAEGSVFPGCYWGSYGYPLGYSVGCGYGSTYSPVGYGLGYGYNGCGAYRRYWPFALY</sequence>
<gene>
    <name type="primary">Krtap8-1</name>
</gene>
<proteinExistence type="evidence at transcript level"/>
<name>KRA81_MOUSE</name>
<evidence type="ECO:0000305" key="1"/>
<organism>
    <name type="scientific">Mus musculus</name>
    <name type="common">Mouse</name>
    <dbReference type="NCBI Taxonomy" id="10090"/>
    <lineage>
        <taxon>Eukaryota</taxon>
        <taxon>Metazoa</taxon>
        <taxon>Chordata</taxon>
        <taxon>Craniata</taxon>
        <taxon>Vertebrata</taxon>
        <taxon>Euteleostomi</taxon>
        <taxon>Mammalia</taxon>
        <taxon>Eutheria</taxon>
        <taxon>Euarchontoglires</taxon>
        <taxon>Glires</taxon>
        <taxon>Rodentia</taxon>
        <taxon>Myomorpha</taxon>
        <taxon>Muroidea</taxon>
        <taxon>Muridae</taxon>
        <taxon>Murinae</taxon>
        <taxon>Mus</taxon>
        <taxon>Mus</taxon>
    </lineage>
</organism>
<keyword id="KW-0416">Keratin</keyword>
<keyword id="KW-1185">Reference proteome</keyword>
<keyword id="KW-0677">Repeat</keyword>
<dbReference type="EMBL" id="AK133727">
    <property type="protein sequence ID" value="BAE21804.1"/>
    <property type="molecule type" value="mRNA"/>
</dbReference>
<dbReference type="EMBL" id="D86423">
    <property type="protein sequence ID" value="BAA19684.1"/>
    <property type="molecule type" value="mRNA"/>
</dbReference>
<dbReference type="CCDS" id="CCDS49901.1"/>
<dbReference type="RefSeq" id="NP_034805.1">
    <property type="nucleotide sequence ID" value="NM_010675.1"/>
</dbReference>
<dbReference type="FunCoup" id="O08633">
    <property type="interactions" value="33"/>
</dbReference>
<dbReference type="STRING" id="10090.ENSMUSP00000072129"/>
<dbReference type="PaxDb" id="10090-ENSMUSP00000072129"/>
<dbReference type="ProteomicsDB" id="264800"/>
<dbReference type="Antibodypedia" id="6687">
    <property type="antibodies" value="47 antibodies from 13 providers"/>
</dbReference>
<dbReference type="Ensembl" id="ENSMUST00000072280.5">
    <property type="protein sequence ID" value="ENSMUSP00000072129.4"/>
    <property type="gene ID" value="ENSMUSG00000059632.5"/>
</dbReference>
<dbReference type="GeneID" id="16703"/>
<dbReference type="KEGG" id="mmu:16703"/>
<dbReference type="UCSC" id="uc007zvr.2">
    <property type="organism name" value="mouse"/>
</dbReference>
<dbReference type="AGR" id="MGI:1330293"/>
<dbReference type="CTD" id="337879"/>
<dbReference type="MGI" id="MGI:1330293">
    <property type="gene designation" value="Krtap8-1"/>
</dbReference>
<dbReference type="VEuPathDB" id="HostDB:ENSMUSG00000059632"/>
<dbReference type="eggNOG" id="ENOG502SW61">
    <property type="taxonomic scope" value="Eukaryota"/>
</dbReference>
<dbReference type="GeneTree" id="ENSGT00530000064274"/>
<dbReference type="HOGENOM" id="CLU_3019710_0_0_1"/>
<dbReference type="InParanoid" id="O08633"/>
<dbReference type="OMA" id="RRYWPYA"/>
<dbReference type="OrthoDB" id="62848at9989"/>
<dbReference type="PhylomeDB" id="O08633"/>
<dbReference type="TreeFam" id="TF338337"/>
<dbReference type="Reactome" id="R-MMU-6805567">
    <property type="pathway name" value="Keratinization"/>
</dbReference>
<dbReference type="BioGRID-ORCS" id="16703">
    <property type="hits" value="6 hits in 78 CRISPR screens"/>
</dbReference>
<dbReference type="PRO" id="PR:O08633"/>
<dbReference type="Proteomes" id="UP000000589">
    <property type="component" value="Chromosome 16"/>
</dbReference>
<dbReference type="RNAct" id="O08633">
    <property type="molecule type" value="protein"/>
</dbReference>
<dbReference type="Bgee" id="ENSMUSG00000059632">
    <property type="expression patterns" value="Expressed in lip and 16 other cell types or tissues"/>
</dbReference>
<dbReference type="GO" id="GO:0005829">
    <property type="term" value="C:cytosol"/>
    <property type="evidence" value="ECO:0007669"/>
    <property type="project" value="UniProtKB-ARBA"/>
</dbReference>
<dbReference type="GO" id="GO:0005882">
    <property type="term" value="C:intermediate filament"/>
    <property type="evidence" value="ECO:0007669"/>
    <property type="project" value="UniProtKB-KW"/>
</dbReference>
<dbReference type="InterPro" id="IPR039351">
    <property type="entry name" value="KRTAP8-1"/>
</dbReference>
<dbReference type="InterPro" id="IPR021743">
    <property type="entry name" value="KRTAP_type8/19/20/21/22"/>
</dbReference>
<dbReference type="PANTHER" id="PTHR36131">
    <property type="entry name" value="KERATIN-ASSOCIATED PROTEIN 8-1"/>
    <property type="match status" value="1"/>
</dbReference>
<dbReference type="PANTHER" id="PTHR36131:SF1">
    <property type="entry name" value="KERATIN-ASSOCIATED PROTEIN 8-1"/>
    <property type="match status" value="1"/>
</dbReference>
<dbReference type="Pfam" id="PF11759">
    <property type="entry name" value="KRTAP"/>
    <property type="match status" value="1"/>
</dbReference>
<feature type="chain" id="PRO_0000185186" description="Keratin-associated protein 8-1">
    <location>
        <begin position="1"/>
        <end position="61"/>
    </location>
</feature>
<feature type="region of interest" description="11 X 2 AA repeats of G-[YCGS]">
    <location>
        <begin position="13"/>
        <end position="49"/>
    </location>
</feature>
<feature type="sequence conflict" description="In Ref. 2; BAA19684." evidence="1" ref="2">
    <original>L</original>
    <variation>F</variation>
    <location>
        <position position="42"/>
    </location>
</feature>